<reference key="1">
    <citation type="journal article" date="2003" name="Proc. Natl. Acad. Sci. U.S.A.">
        <title>The complete genome sequence of Mycobacterium bovis.</title>
        <authorList>
            <person name="Garnier T."/>
            <person name="Eiglmeier K."/>
            <person name="Camus J.-C."/>
            <person name="Medina N."/>
            <person name="Mansoor H."/>
            <person name="Pryor M."/>
            <person name="Duthoy S."/>
            <person name="Grondin S."/>
            <person name="Lacroix C."/>
            <person name="Monsempe C."/>
            <person name="Simon S."/>
            <person name="Harris B."/>
            <person name="Atkin R."/>
            <person name="Doggett J."/>
            <person name="Mayes R."/>
            <person name="Keating L."/>
            <person name="Wheeler P.R."/>
            <person name="Parkhill J."/>
            <person name="Barrell B.G."/>
            <person name="Cole S.T."/>
            <person name="Gordon S.V."/>
            <person name="Hewinson R.G."/>
        </authorList>
    </citation>
    <scope>NUCLEOTIDE SEQUENCE [LARGE SCALE GENOMIC DNA]</scope>
    <source>
        <strain>ATCC BAA-935 / AF2122/97</strain>
    </source>
</reference>
<reference key="2">
    <citation type="journal article" date="2017" name="Genome Announc.">
        <title>Updated reference genome sequence and annotation of Mycobacterium bovis AF2122/97.</title>
        <authorList>
            <person name="Malone K.M."/>
            <person name="Farrell D."/>
            <person name="Stuber T.P."/>
            <person name="Schubert O.T."/>
            <person name="Aebersold R."/>
            <person name="Robbe-Austerman S."/>
            <person name="Gordon S.V."/>
        </authorList>
    </citation>
    <scope>NUCLEOTIDE SEQUENCE [LARGE SCALE GENOMIC DNA]</scope>
    <scope>GENOME REANNOTATION</scope>
    <source>
        <strain>ATCC BAA-935 / AF2122/97</strain>
    </source>
</reference>
<organism>
    <name type="scientific">Mycobacterium bovis (strain ATCC BAA-935 / AF2122/97)</name>
    <dbReference type="NCBI Taxonomy" id="233413"/>
    <lineage>
        <taxon>Bacteria</taxon>
        <taxon>Bacillati</taxon>
        <taxon>Actinomycetota</taxon>
        <taxon>Actinomycetes</taxon>
        <taxon>Mycobacteriales</taxon>
        <taxon>Mycobacteriaceae</taxon>
        <taxon>Mycobacterium</taxon>
        <taxon>Mycobacterium tuberculosis complex</taxon>
    </lineage>
</organism>
<gene>
    <name type="ordered locus">BQ2027_MB0907C</name>
</gene>
<protein>
    <recommendedName>
        <fullName>Uncharacterized protein Mb0907c</fullName>
    </recommendedName>
</protein>
<keyword id="KW-1185">Reference proteome</keyword>
<name>Y907_MYCBO</name>
<evidence type="ECO:0000256" key="1">
    <source>
        <dbReference type="SAM" id="MobiDB-lite"/>
    </source>
</evidence>
<sequence>MRELKVVGLDADGKNIICQGAIPSEQFKLPVDDRLRAALRDDSVQPEQAQLDIEVTNVLSPKEIQARIRAGASVEQVAAASGSDIARIRRFAHPVLLERSRAAELATAAHPVLADGPAVLTMQETVAAALVARGLNPDSLTWDAWRNEDSRWTVQLAWKAGRSDNLAHFRFTPGAHGGTATAIDDTAHELINPTFNRPLRPLAPVAHLDFDEPEPAQPTLTVPSAQPVSNRRGKPAIPAWEDVLLGVRSGGRR</sequence>
<proteinExistence type="predicted"/>
<feature type="chain" id="PRO_0000103726" description="Uncharacterized protein Mb0907c">
    <location>
        <begin position="1"/>
        <end position="253"/>
    </location>
</feature>
<feature type="region of interest" description="Disordered" evidence="1">
    <location>
        <begin position="211"/>
        <end position="235"/>
    </location>
</feature>
<feature type="compositionally biased region" description="Polar residues" evidence="1">
    <location>
        <begin position="218"/>
        <end position="229"/>
    </location>
</feature>
<dbReference type="EMBL" id="LT708304">
    <property type="protein sequence ID" value="SIT99505.1"/>
    <property type="molecule type" value="Genomic_DNA"/>
</dbReference>
<dbReference type="RefSeq" id="NP_854564.1">
    <property type="nucleotide sequence ID" value="NC_002945.3"/>
</dbReference>
<dbReference type="SMR" id="P64740"/>
<dbReference type="KEGG" id="mbo:BQ2027_MB0907C"/>
<dbReference type="PATRIC" id="fig|233413.5.peg.987"/>
<dbReference type="Proteomes" id="UP000001419">
    <property type="component" value="Chromosome"/>
</dbReference>
<dbReference type="InterPro" id="IPR021421">
    <property type="entry name" value="DUF3071"/>
</dbReference>
<dbReference type="InterPro" id="IPR047682">
    <property type="entry name" value="SepH-like"/>
</dbReference>
<dbReference type="NCBIfam" id="NF040712">
    <property type="entry name" value="SepH"/>
    <property type="match status" value="1"/>
</dbReference>
<dbReference type="Pfam" id="PF11268">
    <property type="entry name" value="DUF3071"/>
    <property type="match status" value="1"/>
</dbReference>
<accession>P64740</accession>
<accession>A0A1R3XX32</accession>
<accession>Q10545</accession>
<accession>X2BGF0</accession>